<accession>Q6LUP6</accession>
<proteinExistence type="inferred from homology"/>
<sequence>MITGIQITKSANDDLLNSIWLLDSETNEARCVVAKAGFEEDQVIAAADLGEYESRDVAIEVPAKVEGGQHLNVNVLKKETLEDAVAHPEKYPQLTIRVSGYAVRFNSLTTEQQKDVIARTFTSSL</sequence>
<dbReference type="EMBL" id="CR378664">
    <property type="protein sequence ID" value="CAG18979.1"/>
    <property type="status" value="ALT_INIT"/>
    <property type="molecule type" value="Genomic_DNA"/>
</dbReference>
<dbReference type="RefSeq" id="WP_011217330.1">
    <property type="nucleotide sequence ID" value="NC_006370.1"/>
</dbReference>
<dbReference type="SMR" id="Q6LUP6"/>
<dbReference type="STRING" id="298386.PBPRA0556"/>
<dbReference type="KEGG" id="ppr:PBPRA0556"/>
<dbReference type="eggNOG" id="COG3445">
    <property type="taxonomic scope" value="Bacteria"/>
</dbReference>
<dbReference type="HOGENOM" id="CLU_133780_0_0_6"/>
<dbReference type="Proteomes" id="UP000000593">
    <property type="component" value="Chromosome 1"/>
</dbReference>
<dbReference type="GO" id="GO:0005829">
    <property type="term" value="C:cytosol"/>
    <property type="evidence" value="ECO:0007669"/>
    <property type="project" value="TreeGrafter"/>
</dbReference>
<dbReference type="GO" id="GO:0008861">
    <property type="term" value="F:formate C-acetyltransferase activity"/>
    <property type="evidence" value="ECO:0007669"/>
    <property type="project" value="TreeGrafter"/>
</dbReference>
<dbReference type="Gene3D" id="3.20.70.20">
    <property type="match status" value="1"/>
</dbReference>
<dbReference type="HAMAP" id="MF_00806">
    <property type="entry name" value="GrcA"/>
    <property type="match status" value="1"/>
</dbReference>
<dbReference type="InterPro" id="IPR050244">
    <property type="entry name" value="Auton_GlycylRad_Cofactor"/>
</dbReference>
<dbReference type="InterPro" id="IPR019777">
    <property type="entry name" value="Form_AcTrfase_GR_CS"/>
</dbReference>
<dbReference type="InterPro" id="IPR001150">
    <property type="entry name" value="Gly_radical"/>
</dbReference>
<dbReference type="InterPro" id="IPR011140">
    <property type="entry name" value="Glycyl_radical_cofactor_GrcA"/>
</dbReference>
<dbReference type="NCBIfam" id="TIGR04365">
    <property type="entry name" value="spare_glycyl"/>
    <property type="match status" value="1"/>
</dbReference>
<dbReference type="PANTHER" id="PTHR30191">
    <property type="entry name" value="FORMATE ACETYLTRANSFERASE"/>
    <property type="match status" value="1"/>
</dbReference>
<dbReference type="PANTHER" id="PTHR30191:SF0">
    <property type="entry name" value="FORMATE ACETYLTRANSFERASE 1"/>
    <property type="match status" value="1"/>
</dbReference>
<dbReference type="Pfam" id="PF01228">
    <property type="entry name" value="Gly_radical"/>
    <property type="match status" value="1"/>
</dbReference>
<dbReference type="PIRSF" id="PIRSF000378">
    <property type="entry name" value="Gly_radicl_yfiD"/>
    <property type="match status" value="1"/>
</dbReference>
<dbReference type="SUPFAM" id="SSF51998">
    <property type="entry name" value="PFL-like glycyl radical enzymes"/>
    <property type="match status" value="1"/>
</dbReference>
<dbReference type="PROSITE" id="PS00850">
    <property type="entry name" value="GLY_RADICAL_1"/>
    <property type="match status" value="1"/>
</dbReference>
<dbReference type="PROSITE" id="PS51149">
    <property type="entry name" value="GLY_RADICAL_2"/>
    <property type="match status" value="1"/>
</dbReference>
<keyword id="KW-0556">Organic radical</keyword>
<keyword id="KW-1185">Reference proteome</keyword>
<evidence type="ECO:0000255" key="1">
    <source>
        <dbReference type="HAMAP-Rule" id="MF_00806"/>
    </source>
</evidence>
<evidence type="ECO:0000305" key="2"/>
<comment type="function">
    <text evidence="1">Acts as a radical domain for damaged PFL and possibly other radical proteins.</text>
</comment>
<comment type="sequence caution" evidence="2">
    <conflict type="erroneous initiation">
        <sequence resource="EMBL-CDS" id="CAG18979"/>
    </conflict>
</comment>
<protein>
    <recommendedName>
        <fullName evidence="1">Autonomous glycyl radical cofactor</fullName>
    </recommendedName>
</protein>
<name>GRCA_PHOPR</name>
<feature type="chain" id="PRO_0000166705" description="Autonomous glycyl radical cofactor">
    <location>
        <begin position="1"/>
        <end position="125"/>
    </location>
</feature>
<feature type="domain" description="Glycine radical" evidence="1">
    <location>
        <begin position="5"/>
        <end position="125"/>
    </location>
</feature>
<feature type="modified residue" description="Glycine radical" evidence="1">
    <location>
        <position position="100"/>
    </location>
</feature>
<organism>
    <name type="scientific">Photobacterium profundum (strain SS9)</name>
    <dbReference type="NCBI Taxonomy" id="298386"/>
    <lineage>
        <taxon>Bacteria</taxon>
        <taxon>Pseudomonadati</taxon>
        <taxon>Pseudomonadota</taxon>
        <taxon>Gammaproteobacteria</taxon>
        <taxon>Vibrionales</taxon>
        <taxon>Vibrionaceae</taxon>
        <taxon>Photobacterium</taxon>
    </lineage>
</organism>
<gene>
    <name evidence="1" type="primary">grcA</name>
    <name type="ordered locus">PBPRA0556</name>
</gene>
<reference key="1">
    <citation type="journal article" date="2005" name="Science">
        <title>Life at depth: Photobacterium profundum genome sequence and expression analysis.</title>
        <authorList>
            <person name="Vezzi A."/>
            <person name="Campanaro S."/>
            <person name="D'Angelo M."/>
            <person name="Simonato F."/>
            <person name="Vitulo N."/>
            <person name="Lauro F.M."/>
            <person name="Cestaro A."/>
            <person name="Malacrida G."/>
            <person name="Simionati B."/>
            <person name="Cannata N."/>
            <person name="Romualdi C."/>
            <person name="Bartlett D.H."/>
            <person name="Valle G."/>
        </authorList>
    </citation>
    <scope>NUCLEOTIDE SEQUENCE [LARGE SCALE GENOMIC DNA]</scope>
    <source>
        <strain>ATCC BAA-1253 / SS9</strain>
    </source>
</reference>